<proteinExistence type="inferred from homology"/>
<dbReference type="EC" id="5.1.1.1" evidence="1"/>
<dbReference type="EMBL" id="CP000943">
    <property type="protein sequence ID" value="ACA17034.1"/>
    <property type="molecule type" value="Genomic_DNA"/>
</dbReference>
<dbReference type="RefSeq" id="WP_012332440.1">
    <property type="nucleotide sequence ID" value="NC_010511.1"/>
</dbReference>
<dbReference type="SMR" id="B0UL34"/>
<dbReference type="STRING" id="426117.M446_2595"/>
<dbReference type="KEGG" id="met:M446_2595"/>
<dbReference type="eggNOG" id="COG0787">
    <property type="taxonomic scope" value="Bacteria"/>
</dbReference>
<dbReference type="HOGENOM" id="CLU_028393_1_1_5"/>
<dbReference type="UniPathway" id="UPA00042">
    <property type="reaction ID" value="UER00497"/>
</dbReference>
<dbReference type="GO" id="GO:0005829">
    <property type="term" value="C:cytosol"/>
    <property type="evidence" value="ECO:0007669"/>
    <property type="project" value="TreeGrafter"/>
</dbReference>
<dbReference type="GO" id="GO:0008784">
    <property type="term" value="F:alanine racemase activity"/>
    <property type="evidence" value="ECO:0007669"/>
    <property type="project" value="UniProtKB-UniRule"/>
</dbReference>
<dbReference type="GO" id="GO:0030170">
    <property type="term" value="F:pyridoxal phosphate binding"/>
    <property type="evidence" value="ECO:0007669"/>
    <property type="project" value="UniProtKB-UniRule"/>
</dbReference>
<dbReference type="GO" id="GO:0030632">
    <property type="term" value="P:D-alanine biosynthetic process"/>
    <property type="evidence" value="ECO:0007669"/>
    <property type="project" value="UniProtKB-UniRule"/>
</dbReference>
<dbReference type="CDD" id="cd00430">
    <property type="entry name" value="PLPDE_III_AR"/>
    <property type="match status" value="1"/>
</dbReference>
<dbReference type="Gene3D" id="3.20.20.10">
    <property type="entry name" value="Alanine racemase"/>
    <property type="match status" value="1"/>
</dbReference>
<dbReference type="Gene3D" id="2.40.37.10">
    <property type="entry name" value="Lyase, Ornithine Decarboxylase, Chain A, domain 1"/>
    <property type="match status" value="1"/>
</dbReference>
<dbReference type="HAMAP" id="MF_01201">
    <property type="entry name" value="Ala_racemase"/>
    <property type="match status" value="1"/>
</dbReference>
<dbReference type="InterPro" id="IPR000821">
    <property type="entry name" value="Ala_racemase"/>
</dbReference>
<dbReference type="InterPro" id="IPR009006">
    <property type="entry name" value="Ala_racemase/Decarboxylase_C"/>
</dbReference>
<dbReference type="InterPro" id="IPR011079">
    <property type="entry name" value="Ala_racemase_C"/>
</dbReference>
<dbReference type="InterPro" id="IPR001608">
    <property type="entry name" value="Ala_racemase_N"/>
</dbReference>
<dbReference type="InterPro" id="IPR029066">
    <property type="entry name" value="PLP-binding_barrel"/>
</dbReference>
<dbReference type="NCBIfam" id="TIGR00492">
    <property type="entry name" value="alr"/>
    <property type="match status" value="1"/>
</dbReference>
<dbReference type="PANTHER" id="PTHR30511">
    <property type="entry name" value="ALANINE RACEMASE"/>
    <property type="match status" value="1"/>
</dbReference>
<dbReference type="PANTHER" id="PTHR30511:SF0">
    <property type="entry name" value="ALANINE RACEMASE, CATABOLIC-RELATED"/>
    <property type="match status" value="1"/>
</dbReference>
<dbReference type="Pfam" id="PF00842">
    <property type="entry name" value="Ala_racemase_C"/>
    <property type="match status" value="1"/>
</dbReference>
<dbReference type="Pfam" id="PF01168">
    <property type="entry name" value="Ala_racemase_N"/>
    <property type="match status" value="1"/>
</dbReference>
<dbReference type="PRINTS" id="PR00992">
    <property type="entry name" value="ALARACEMASE"/>
</dbReference>
<dbReference type="SMART" id="SM01005">
    <property type="entry name" value="Ala_racemase_C"/>
    <property type="match status" value="1"/>
</dbReference>
<dbReference type="SUPFAM" id="SSF50621">
    <property type="entry name" value="Alanine racemase C-terminal domain-like"/>
    <property type="match status" value="1"/>
</dbReference>
<dbReference type="SUPFAM" id="SSF51419">
    <property type="entry name" value="PLP-binding barrel"/>
    <property type="match status" value="1"/>
</dbReference>
<comment type="function">
    <text evidence="1">Catalyzes the interconversion of L-alanine and D-alanine. May also act on other amino acids.</text>
</comment>
<comment type="catalytic activity">
    <reaction evidence="1">
        <text>L-alanine = D-alanine</text>
        <dbReference type="Rhea" id="RHEA:20249"/>
        <dbReference type="ChEBI" id="CHEBI:57416"/>
        <dbReference type="ChEBI" id="CHEBI:57972"/>
        <dbReference type="EC" id="5.1.1.1"/>
    </reaction>
</comment>
<comment type="cofactor">
    <cofactor evidence="1">
        <name>pyridoxal 5'-phosphate</name>
        <dbReference type="ChEBI" id="CHEBI:597326"/>
    </cofactor>
</comment>
<comment type="pathway">
    <text evidence="1">Amino-acid biosynthesis; D-alanine biosynthesis; D-alanine from L-alanine: step 1/1.</text>
</comment>
<comment type="similarity">
    <text evidence="1">Belongs to the alanine racemase family.</text>
</comment>
<gene>
    <name type="primary">alr</name>
    <name type="ordered locus">M446_2595</name>
</gene>
<protein>
    <recommendedName>
        <fullName evidence="1">Alanine racemase</fullName>
        <ecNumber evidence="1">5.1.1.1</ecNumber>
    </recommendedName>
</protein>
<keyword id="KW-0413">Isomerase</keyword>
<keyword id="KW-0663">Pyridoxal phosphate</keyword>
<sequence>MTATSPHGARLTINLRALAANWRRLAEEAAGAECAAVIKADAYGTGIDRAGPALWRAGCRTFFVAHLSEAERARAALPEAVIYVLNGLPPGSAPAYRDRALRPVLGSREEIEEWAAFCRARGERLPAALHVDTGMNRLGLSPDEALALAGGAALEDVAASLLVSHLVSAEVPGDAVTARQVADFARVAAAFPGLTASLGNSAGTFLGARARHEMVRPGYALYGGNPRPGGPNPMRPVVRLDATILQVRDVPPGATAGYNARWTAPGPRRLATLSLGYADGYPRAGSGRAEAVVAGRRCPVVGTISMDLVILDVTDAPPEAARRGARATLIGEGLDIDEVGQRAGTIGYEILTNLGRRSERAYID</sequence>
<evidence type="ECO:0000255" key="1">
    <source>
        <dbReference type="HAMAP-Rule" id="MF_01201"/>
    </source>
</evidence>
<reference key="1">
    <citation type="submission" date="2008-02" db="EMBL/GenBank/DDBJ databases">
        <title>Complete sequence of chromosome of Methylobacterium sp. 4-46.</title>
        <authorList>
            <consortium name="US DOE Joint Genome Institute"/>
            <person name="Copeland A."/>
            <person name="Lucas S."/>
            <person name="Lapidus A."/>
            <person name="Glavina del Rio T."/>
            <person name="Dalin E."/>
            <person name="Tice H."/>
            <person name="Bruce D."/>
            <person name="Goodwin L."/>
            <person name="Pitluck S."/>
            <person name="Chertkov O."/>
            <person name="Brettin T."/>
            <person name="Detter J.C."/>
            <person name="Han C."/>
            <person name="Kuske C.R."/>
            <person name="Schmutz J."/>
            <person name="Larimer F."/>
            <person name="Land M."/>
            <person name="Hauser L."/>
            <person name="Kyrpides N."/>
            <person name="Ivanova N."/>
            <person name="Marx C.J."/>
            <person name="Richardson P."/>
        </authorList>
    </citation>
    <scope>NUCLEOTIDE SEQUENCE [LARGE SCALE GENOMIC DNA]</scope>
    <source>
        <strain>4-46</strain>
    </source>
</reference>
<organism>
    <name type="scientific">Methylobacterium sp. (strain 4-46)</name>
    <dbReference type="NCBI Taxonomy" id="426117"/>
    <lineage>
        <taxon>Bacteria</taxon>
        <taxon>Pseudomonadati</taxon>
        <taxon>Pseudomonadota</taxon>
        <taxon>Alphaproteobacteria</taxon>
        <taxon>Hyphomicrobiales</taxon>
        <taxon>Methylobacteriaceae</taxon>
        <taxon>Methylobacterium</taxon>
    </lineage>
</organism>
<feature type="chain" id="PRO_1000138613" description="Alanine racemase">
    <location>
        <begin position="1"/>
        <end position="364"/>
    </location>
</feature>
<feature type="active site" description="Proton acceptor; specific for D-alanine" evidence="1">
    <location>
        <position position="39"/>
    </location>
</feature>
<feature type="active site" description="Proton acceptor; specific for L-alanine" evidence="1">
    <location>
        <position position="258"/>
    </location>
</feature>
<feature type="binding site" evidence="1">
    <location>
        <position position="137"/>
    </location>
    <ligand>
        <name>substrate</name>
    </ligand>
</feature>
<feature type="binding site" evidence="1">
    <location>
        <position position="306"/>
    </location>
    <ligand>
        <name>substrate</name>
    </ligand>
</feature>
<feature type="modified residue" description="N6-(pyridoxal phosphate)lysine" evidence="1">
    <location>
        <position position="39"/>
    </location>
</feature>
<name>ALR_METS4</name>
<accession>B0UL34</accession>